<name>PTH_BAUCH</name>
<keyword id="KW-0963">Cytoplasm</keyword>
<keyword id="KW-0378">Hydrolase</keyword>
<keyword id="KW-1185">Reference proteome</keyword>
<keyword id="KW-0694">RNA-binding</keyword>
<keyword id="KW-0820">tRNA-binding</keyword>
<accession>Q1LTH1</accession>
<evidence type="ECO:0000255" key="1">
    <source>
        <dbReference type="HAMAP-Rule" id="MF_00083"/>
    </source>
</evidence>
<gene>
    <name evidence="1" type="primary">pth</name>
    <name type="ordered locus">BCI_0294</name>
</gene>
<comment type="function">
    <text evidence="1">Hydrolyzes ribosome-free peptidyl-tRNAs (with 1 or more amino acids incorporated), which drop off the ribosome during protein synthesis, or as a result of ribosome stalling.</text>
</comment>
<comment type="function">
    <text evidence="1">Catalyzes the release of premature peptidyl moieties from peptidyl-tRNA molecules trapped in stalled 50S ribosomal subunits, and thus maintains levels of free tRNAs and 50S ribosomes.</text>
</comment>
<comment type="catalytic activity">
    <reaction evidence="1">
        <text>an N-acyl-L-alpha-aminoacyl-tRNA + H2O = an N-acyl-L-amino acid + a tRNA + H(+)</text>
        <dbReference type="Rhea" id="RHEA:54448"/>
        <dbReference type="Rhea" id="RHEA-COMP:10123"/>
        <dbReference type="Rhea" id="RHEA-COMP:13883"/>
        <dbReference type="ChEBI" id="CHEBI:15377"/>
        <dbReference type="ChEBI" id="CHEBI:15378"/>
        <dbReference type="ChEBI" id="CHEBI:59874"/>
        <dbReference type="ChEBI" id="CHEBI:78442"/>
        <dbReference type="ChEBI" id="CHEBI:138191"/>
        <dbReference type="EC" id="3.1.1.29"/>
    </reaction>
</comment>
<comment type="subunit">
    <text evidence="1">Monomer.</text>
</comment>
<comment type="subcellular location">
    <subcellularLocation>
        <location evidence="1">Cytoplasm</location>
    </subcellularLocation>
</comment>
<comment type="similarity">
    <text evidence="1">Belongs to the PTH family.</text>
</comment>
<protein>
    <recommendedName>
        <fullName evidence="1">Peptidyl-tRNA hydrolase</fullName>
        <shortName evidence="1">Pth</shortName>
        <ecNumber evidence="1">3.1.1.29</ecNumber>
    </recommendedName>
</protein>
<dbReference type="EC" id="3.1.1.29" evidence="1"/>
<dbReference type="EMBL" id="CP000238">
    <property type="protein sequence ID" value="ABF13958.1"/>
    <property type="molecule type" value="Genomic_DNA"/>
</dbReference>
<dbReference type="RefSeq" id="WP_011520476.1">
    <property type="nucleotide sequence ID" value="NC_007984.1"/>
</dbReference>
<dbReference type="SMR" id="Q1LTH1"/>
<dbReference type="STRING" id="374463.BCI_0294"/>
<dbReference type="KEGG" id="bci:BCI_0294"/>
<dbReference type="HOGENOM" id="CLU_062456_3_1_6"/>
<dbReference type="OrthoDB" id="9800507at2"/>
<dbReference type="Proteomes" id="UP000002427">
    <property type="component" value="Chromosome"/>
</dbReference>
<dbReference type="GO" id="GO:0005737">
    <property type="term" value="C:cytoplasm"/>
    <property type="evidence" value="ECO:0007669"/>
    <property type="project" value="UniProtKB-SubCell"/>
</dbReference>
<dbReference type="GO" id="GO:0004045">
    <property type="term" value="F:peptidyl-tRNA hydrolase activity"/>
    <property type="evidence" value="ECO:0007669"/>
    <property type="project" value="UniProtKB-UniRule"/>
</dbReference>
<dbReference type="GO" id="GO:0000049">
    <property type="term" value="F:tRNA binding"/>
    <property type="evidence" value="ECO:0007669"/>
    <property type="project" value="UniProtKB-UniRule"/>
</dbReference>
<dbReference type="GO" id="GO:0006515">
    <property type="term" value="P:protein quality control for misfolded or incompletely synthesized proteins"/>
    <property type="evidence" value="ECO:0007669"/>
    <property type="project" value="UniProtKB-UniRule"/>
</dbReference>
<dbReference type="GO" id="GO:0072344">
    <property type="term" value="P:rescue of stalled ribosome"/>
    <property type="evidence" value="ECO:0007669"/>
    <property type="project" value="UniProtKB-UniRule"/>
</dbReference>
<dbReference type="CDD" id="cd00462">
    <property type="entry name" value="PTH"/>
    <property type="match status" value="1"/>
</dbReference>
<dbReference type="FunFam" id="3.40.50.1470:FF:000001">
    <property type="entry name" value="Peptidyl-tRNA hydrolase"/>
    <property type="match status" value="1"/>
</dbReference>
<dbReference type="Gene3D" id="3.40.50.1470">
    <property type="entry name" value="Peptidyl-tRNA hydrolase"/>
    <property type="match status" value="1"/>
</dbReference>
<dbReference type="HAMAP" id="MF_00083">
    <property type="entry name" value="Pept_tRNA_hydro_bact"/>
    <property type="match status" value="1"/>
</dbReference>
<dbReference type="InterPro" id="IPR001328">
    <property type="entry name" value="Pept_tRNA_hydro"/>
</dbReference>
<dbReference type="InterPro" id="IPR018171">
    <property type="entry name" value="Pept_tRNA_hydro_CS"/>
</dbReference>
<dbReference type="InterPro" id="IPR036416">
    <property type="entry name" value="Pept_tRNA_hydro_sf"/>
</dbReference>
<dbReference type="NCBIfam" id="TIGR00447">
    <property type="entry name" value="pth"/>
    <property type="match status" value="1"/>
</dbReference>
<dbReference type="PANTHER" id="PTHR17224">
    <property type="entry name" value="PEPTIDYL-TRNA HYDROLASE"/>
    <property type="match status" value="1"/>
</dbReference>
<dbReference type="PANTHER" id="PTHR17224:SF1">
    <property type="entry name" value="PEPTIDYL-TRNA HYDROLASE"/>
    <property type="match status" value="1"/>
</dbReference>
<dbReference type="Pfam" id="PF01195">
    <property type="entry name" value="Pept_tRNA_hydro"/>
    <property type="match status" value="1"/>
</dbReference>
<dbReference type="SUPFAM" id="SSF53178">
    <property type="entry name" value="Peptidyl-tRNA hydrolase-like"/>
    <property type="match status" value="1"/>
</dbReference>
<dbReference type="PROSITE" id="PS01195">
    <property type="entry name" value="PEPT_TRNA_HYDROL_1"/>
    <property type="match status" value="1"/>
</dbReference>
<dbReference type="PROSITE" id="PS01196">
    <property type="entry name" value="PEPT_TRNA_HYDROL_2"/>
    <property type="match status" value="1"/>
</dbReference>
<reference key="1">
    <citation type="journal article" date="2006" name="PLoS Biol.">
        <title>Metabolic complementarity and genomics of the dual bacterial symbiosis of sharpshooters.</title>
        <authorList>
            <person name="Wu D."/>
            <person name="Daugherty S.C."/>
            <person name="Van Aken S.E."/>
            <person name="Pai G.H."/>
            <person name="Watkins K.L."/>
            <person name="Khouri H."/>
            <person name="Tallon L.J."/>
            <person name="Zaborsky J.M."/>
            <person name="Dunbar H.E."/>
            <person name="Tran P.L."/>
            <person name="Moran N.A."/>
            <person name="Eisen J.A."/>
        </authorList>
    </citation>
    <scope>NUCLEOTIDE SEQUENCE [LARGE SCALE GENOMIC DNA]</scope>
</reference>
<proteinExistence type="inferred from homology"/>
<organism>
    <name type="scientific">Baumannia cicadellinicola subsp. Homalodisca coagulata</name>
    <dbReference type="NCBI Taxonomy" id="374463"/>
    <lineage>
        <taxon>Bacteria</taxon>
        <taxon>Pseudomonadati</taxon>
        <taxon>Pseudomonadota</taxon>
        <taxon>Gammaproteobacteria</taxon>
        <taxon>Candidatus Palibaumannia</taxon>
    </lineage>
</organism>
<feature type="chain" id="PRO_0000264007" description="Peptidyl-tRNA hydrolase">
    <location>
        <begin position="1"/>
        <end position="193"/>
    </location>
</feature>
<feature type="active site" description="Proton acceptor" evidence="1">
    <location>
        <position position="21"/>
    </location>
</feature>
<feature type="binding site" evidence="1">
    <location>
        <position position="16"/>
    </location>
    <ligand>
        <name>tRNA</name>
        <dbReference type="ChEBI" id="CHEBI:17843"/>
    </ligand>
</feature>
<feature type="binding site" evidence="1">
    <location>
        <position position="67"/>
    </location>
    <ligand>
        <name>tRNA</name>
        <dbReference type="ChEBI" id="CHEBI:17843"/>
    </ligand>
</feature>
<feature type="binding site" evidence="1">
    <location>
        <position position="69"/>
    </location>
    <ligand>
        <name>tRNA</name>
        <dbReference type="ChEBI" id="CHEBI:17843"/>
    </ligand>
</feature>
<feature type="binding site" evidence="1">
    <location>
        <position position="115"/>
    </location>
    <ligand>
        <name>tRNA</name>
        <dbReference type="ChEBI" id="CHEBI:17843"/>
    </ligand>
</feature>
<feature type="site" description="Discriminates between blocked and unblocked aminoacyl-tRNA" evidence="1">
    <location>
        <position position="11"/>
    </location>
</feature>
<feature type="site" description="Stabilizes the basic form of H active site to accept a proton" evidence="1">
    <location>
        <position position="94"/>
    </location>
</feature>
<sequence>MTIKLIVGLANPGNKYLLTRHNVGSWYVNQLANNYHVSLINKSSFLGYTGYLNIGKRRIFLLIPTIFMNYNGQAVAAIAKFYNIMPEEILIAHDELNFLPGYARFKYSGGHGGHNGLKDVIYRLGDNNNFYRLRIGIGHPGDKNKVIKFVLDTPLDTEQQLIQHAINESVLCTSLMFQQNIAYAIHQLHTILK</sequence>